<accession>P10832</accession>
<dbReference type="PIR" id="S01803">
    <property type="entry name" value="S01803"/>
</dbReference>
<dbReference type="SMR" id="P10832"/>
<dbReference type="STRING" id="7091.P10832"/>
<dbReference type="InParanoid" id="P10832"/>
<dbReference type="Proteomes" id="UP000005204">
    <property type="component" value="Unassembled WGS sequence"/>
</dbReference>
<dbReference type="GO" id="GO:0005615">
    <property type="term" value="C:extracellular space"/>
    <property type="evidence" value="ECO:0007669"/>
    <property type="project" value="TreeGrafter"/>
</dbReference>
<dbReference type="GO" id="GO:0004867">
    <property type="term" value="F:serine-type endopeptidase inhibitor activity"/>
    <property type="evidence" value="ECO:0007669"/>
    <property type="project" value="UniProtKB-KW"/>
</dbReference>
<dbReference type="FunFam" id="4.10.410.10:FF:000020">
    <property type="entry name" value="Collagen, type VI, alpha 3"/>
    <property type="match status" value="1"/>
</dbReference>
<dbReference type="Gene3D" id="4.10.410.10">
    <property type="entry name" value="Pancreatic trypsin inhibitor Kunitz domain"/>
    <property type="match status" value="1"/>
</dbReference>
<dbReference type="InterPro" id="IPR002223">
    <property type="entry name" value="Kunitz_BPTI"/>
</dbReference>
<dbReference type="InterPro" id="IPR036880">
    <property type="entry name" value="Kunitz_BPTI_sf"/>
</dbReference>
<dbReference type="InterPro" id="IPR020901">
    <property type="entry name" value="Prtase_inh_Kunz-CS"/>
</dbReference>
<dbReference type="InterPro" id="IPR050098">
    <property type="entry name" value="TFPI/VKTCI-like"/>
</dbReference>
<dbReference type="PANTHER" id="PTHR10083:SF374">
    <property type="entry name" value="BPTI_KUNITZ INHIBITOR DOMAIN-CONTAINING PROTEIN"/>
    <property type="match status" value="1"/>
</dbReference>
<dbReference type="PANTHER" id="PTHR10083">
    <property type="entry name" value="KUNITZ-TYPE PROTEASE INHIBITOR-RELATED"/>
    <property type="match status" value="1"/>
</dbReference>
<dbReference type="Pfam" id="PF00014">
    <property type="entry name" value="Kunitz_BPTI"/>
    <property type="match status" value="1"/>
</dbReference>
<dbReference type="PRINTS" id="PR00759">
    <property type="entry name" value="BASICPTASE"/>
</dbReference>
<dbReference type="SMART" id="SM00131">
    <property type="entry name" value="KU"/>
    <property type="match status" value="1"/>
</dbReference>
<dbReference type="SUPFAM" id="SSF57362">
    <property type="entry name" value="BPTI-like"/>
    <property type="match status" value="1"/>
</dbReference>
<dbReference type="PROSITE" id="PS00280">
    <property type="entry name" value="BPTI_KUNITZ_1"/>
    <property type="match status" value="1"/>
</dbReference>
<dbReference type="PROSITE" id="PS50279">
    <property type="entry name" value="BPTI_KUNITZ_2"/>
    <property type="match status" value="1"/>
</dbReference>
<proteinExistence type="evidence at protein level"/>
<reference key="1">
    <citation type="journal article" date="1988" name="Biol. Chem. Hoppe-Seyler">
        <title>Amino-acid sequences of two basic chymotrypsin inhibitors from silkworm larval hemolymph.</title>
        <authorList>
            <person name="Sasaki T."/>
        </authorList>
    </citation>
    <scope>PROTEIN SEQUENCE</scope>
    <source>
        <tissue>Larval hemolymph</tissue>
    </source>
</reference>
<keyword id="KW-0903">Direct protein sequencing</keyword>
<keyword id="KW-1015">Disulfide bond</keyword>
<keyword id="KW-0646">Protease inhibitor</keyword>
<keyword id="KW-1185">Reference proteome</keyword>
<keyword id="KW-0722">Serine protease inhibitor</keyword>
<protein>
    <recommendedName>
        <fullName>Chymotrypsin inhibitor SCI-II</fullName>
    </recommendedName>
</protein>
<comment type="function">
    <text>Inhibits chymotrypsin and thus avoids the accidental chymotrypsin-mediated activation of prophenoloxidase. This enzyme is required by the insect immune system to produce melanin which is used to engulf foreign objects.</text>
</comment>
<comment type="function">
    <text>Also inhibits trypsin weakly, this may be due to the presence of a pseudo-reactive bond in positions 44-45 (Lys-Gly).</text>
</comment>
<feature type="chain" id="PRO_0000155422" description="Chymotrypsin inhibitor SCI-II">
    <location>
        <begin position="1"/>
        <end position="62"/>
    </location>
</feature>
<feature type="domain" description="BPTI/Kunitz inhibitor" evidence="2">
    <location>
        <begin position="9"/>
        <end position="60"/>
    </location>
</feature>
<feature type="site" description="Reactive bond" evidence="1">
    <location>
        <begin position="20"/>
        <end position="21"/>
    </location>
</feature>
<feature type="site" description="Pseudo reactive bond for trypsin">
    <location>
        <begin position="44"/>
        <end position="45"/>
    </location>
</feature>
<feature type="disulfide bond" evidence="2">
    <location>
        <begin position="9"/>
        <end position="60"/>
    </location>
</feature>
<feature type="disulfide bond" evidence="2">
    <location>
        <begin position="19"/>
        <end position="43"/>
    </location>
</feature>
<feature type="disulfide bond" evidence="2">
    <location>
        <begin position="35"/>
        <end position="56"/>
    </location>
</feature>
<sequence length="62" mass="7067">DKPTTKPICEQAFGNSGPCFAYIKLYSYNQKTKKCEEFIYGGCKGNDNRFDTLAECEQKCIK</sequence>
<name>ISC2_BOMMO</name>
<evidence type="ECO:0000250" key="1"/>
<evidence type="ECO:0000255" key="2">
    <source>
        <dbReference type="PROSITE-ProRule" id="PRU00031"/>
    </source>
</evidence>
<organism>
    <name type="scientific">Bombyx mori</name>
    <name type="common">Silk moth</name>
    <dbReference type="NCBI Taxonomy" id="7091"/>
    <lineage>
        <taxon>Eukaryota</taxon>
        <taxon>Metazoa</taxon>
        <taxon>Ecdysozoa</taxon>
        <taxon>Arthropoda</taxon>
        <taxon>Hexapoda</taxon>
        <taxon>Insecta</taxon>
        <taxon>Pterygota</taxon>
        <taxon>Neoptera</taxon>
        <taxon>Endopterygota</taxon>
        <taxon>Lepidoptera</taxon>
        <taxon>Glossata</taxon>
        <taxon>Ditrysia</taxon>
        <taxon>Bombycoidea</taxon>
        <taxon>Bombycidae</taxon>
        <taxon>Bombycinae</taxon>
        <taxon>Bombyx</taxon>
    </lineage>
</organism>